<gene>
    <name evidence="5" type="primary">SSL13</name>
    <name evidence="7" type="synonym">LAP3</name>
    <name evidence="6" type="synonym">SS11</name>
    <name evidence="9" type="ordered locus">At3g59530</name>
    <name evidence="10" type="ORF">T16L24.80</name>
</gene>
<sequence length="403" mass="45629">MEKKGQHGTYESMMTHHPILCIIALSVLFIAIDPFHMSPIGGREFKPVKHEVAPYKEVMGSWPRDNLSRLGNHGKLEFVDQVFGPESLEFDSLGRGPYTGLADGRVVRWMGEAIGWETFSVVTSKWSEEACVRGVDSTTNKQWKHEKLCGRPLGLRFHKETGNLYIADAYYGLLVVGPEGGIATPLATHVEGKPILFANDLDIHRNGSIFFTDTSKRYDRANHFFILLEGESTGRLLRYDPPTKTTHIVLEGLAFPNGIQLSKDQSFLLFTETTNCRLVKYWLEGPKMGEVEVVADLPGFPDNVRINEEGQFWVAIDCCRTPAQEVLTNNPWIRSIYFRLPIPMKLLAKTMGMRMYTVISRFDEEGKVLEVLEDRQGKVMKLWIGTVAHNHIATLPYPLTMNQ</sequence>
<organism evidence="11">
    <name type="scientific">Arabidopsis thaliana</name>
    <name type="common">Mouse-ear cress</name>
    <dbReference type="NCBI Taxonomy" id="3702"/>
    <lineage>
        <taxon>Eukaryota</taxon>
        <taxon>Viridiplantae</taxon>
        <taxon>Streptophyta</taxon>
        <taxon>Embryophyta</taxon>
        <taxon>Tracheophyta</taxon>
        <taxon>Spermatophyta</taxon>
        <taxon>Magnoliopsida</taxon>
        <taxon>eudicotyledons</taxon>
        <taxon>Gunneridae</taxon>
        <taxon>Pentapetalae</taxon>
        <taxon>rosids</taxon>
        <taxon>malvids</taxon>
        <taxon>Brassicales</taxon>
        <taxon>Brassicaceae</taxon>
        <taxon>Camelineae</taxon>
        <taxon>Arabidopsis</taxon>
    </lineage>
</organism>
<accession>Q9M1B4</accession>
<accession>Q84J97</accession>
<proteinExistence type="evidence at protein level"/>
<evidence type="ECO:0000250" key="1"/>
<evidence type="ECO:0000255" key="2"/>
<evidence type="ECO:0000255" key="3">
    <source>
        <dbReference type="PROSITE-ProRule" id="PRU00498"/>
    </source>
</evidence>
<evidence type="ECO:0000269" key="4">
    <source>
    </source>
</evidence>
<evidence type="ECO:0000303" key="5">
    <source>
    </source>
</evidence>
<evidence type="ECO:0000303" key="6">
    <source>
    </source>
</evidence>
<evidence type="ECO:0000303" key="7">
    <source>
    </source>
</evidence>
<evidence type="ECO:0000305" key="8"/>
<evidence type="ECO:0000312" key="9">
    <source>
        <dbReference type="Araport" id="AT3G59530"/>
    </source>
</evidence>
<evidence type="ECO:0000312" key="10">
    <source>
        <dbReference type="EMBL" id="CAB75450.1"/>
    </source>
</evidence>
<evidence type="ECO:0000312" key="11">
    <source>
        <dbReference type="Proteomes" id="UP000006548"/>
    </source>
</evidence>
<name>SSL13_ARATH</name>
<comment type="function">
    <text evidence="4">Required for the exine formation during pollen development.</text>
</comment>
<comment type="subcellular location">
    <subcellularLocation>
        <location evidence="1">Vacuole</location>
    </subcellularLocation>
</comment>
<comment type="alternative products">
    <event type="alternative splicing"/>
    <isoform>
        <id>Q9M1B4-1</id>
        <name>1</name>
        <sequence type="displayed"/>
    </isoform>
    <isoform>
        <id>Q9M1B4-2</id>
        <name>2</name>
        <sequence type="described" ref="VSP_057337"/>
    </isoform>
</comment>
<comment type="disruption phenotype">
    <text evidence="4">Abnormal stigma binding and male sterility. Abnormal pollen exine which is thinner, weaker, and missing some connections between their roof-like tectum structures. Content modification of a broad range of metabolic compounds, such as nonacosane and naringenin chalcone.</text>
</comment>
<comment type="similarity">
    <text evidence="8">Belongs to the strictosidine synthase family.</text>
</comment>
<feature type="signal peptide" evidence="2">
    <location>
        <begin position="1"/>
        <end position="42"/>
    </location>
</feature>
<feature type="chain" id="PRO_0000431598" description="Protein STRICTOSIDINE SYNTHASE-LIKE 13" evidence="2">
    <location>
        <begin position="43"/>
        <end position="403"/>
    </location>
</feature>
<feature type="glycosylation site" description="N-linked (GlcNAc...) asparagine" evidence="3">
    <location>
        <position position="66"/>
    </location>
</feature>
<feature type="glycosylation site" description="N-linked (GlcNAc...) asparagine" evidence="3">
    <location>
        <position position="206"/>
    </location>
</feature>
<feature type="splice variant" id="VSP_057337" description="In isoform 2.">
    <original>M</original>
    <variation>MKLVSEVREVQG</variation>
    <location>
        <position position="380"/>
    </location>
</feature>
<feature type="mutagenesis site" description="In lap3-1; abnormal pollen exine." evidence="4">
    <original>E</original>
    <variation>K</variation>
    <location>
        <position position="89"/>
    </location>
</feature>
<dbReference type="EMBL" id="AL138659">
    <property type="protein sequence ID" value="CAB75450.1"/>
    <property type="molecule type" value="Genomic_DNA"/>
</dbReference>
<dbReference type="EMBL" id="CP002686">
    <property type="protein sequence ID" value="AEE79936.1"/>
    <property type="molecule type" value="Genomic_DNA"/>
</dbReference>
<dbReference type="EMBL" id="CP002686">
    <property type="protein sequence ID" value="AEE79937.1"/>
    <property type="molecule type" value="Genomic_DNA"/>
</dbReference>
<dbReference type="EMBL" id="CP002686">
    <property type="protein sequence ID" value="ANM63538.1"/>
    <property type="molecule type" value="Genomic_DNA"/>
</dbReference>
<dbReference type="EMBL" id="BT004209">
    <property type="protein sequence ID" value="AAO42227.1"/>
    <property type="molecule type" value="mRNA"/>
</dbReference>
<dbReference type="EMBL" id="BT005675">
    <property type="protein sequence ID" value="AAO64095.1"/>
    <property type="molecule type" value="mRNA"/>
</dbReference>
<dbReference type="PIR" id="T49294">
    <property type="entry name" value="T49294"/>
</dbReference>
<dbReference type="RefSeq" id="NP_001325620.1">
    <molecule id="Q9M1B4-1"/>
    <property type="nucleotide sequence ID" value="NM_001339986.1"/>
</dbReference>
<dbReference type="RefSeq" id="NP_191512.1">
    <molecule id="Q9M1B4-1"/>
    <property type="nucleotide sequence ID" value="NM_115815.6"/>
</dbReference>
<dbReference type="RefSeq" id="NP_974462.1">
    <molecule id="Q9M1B4-1"/>
    <property type="nucleotide sequence ID" value="NM_202733.3"/>
</dbReference>
<dbReference type="SMR" id="Q9M1B4"/>
<dbReference type="FunCoup" id="Q9M1B4">
    <property type="interactions" value="1583"/>
</dbReference>
<dbReference type="IntAct" id="Q9M1B4">
    <property type="interactions" value="2"/>
</dbReference>
<dbReference type="STRING" id="3702.Q9M1B4"/>
<dbReference type="GlyCosmos" id="Q9M1B4">
    <property type="glycosylation" value="2 sites, No reported glycans"/>
</dbReference>
<dbReference type="GlyGen" id="Q9M1B4">
    <property type="glycosylation" value="2 sites"/>
</dbReference>
<dbReference type="PaxDb" id="3702-AT3G59530.1"/>
<dbReference type="ProteomicsDB" id="228378">
    <molecule id="Q9M1B4-1"/>
</dbReference>
<dbReference type="EnsemblPlants" id="AT3G59530.1">
    <molecule id="Q9M1B4-1"/>
    <property type="protein sequence ID" value="AT3G59530.1"/>
    <property type="gene ID" value="AT3G59530"/>
</dbReference>
<dbReference type="EnsemblPlants" id="AT3G59530.2">
    <molecule id="Q9M1B4-1"/>
    <property type="protein sequence ID" value="AT3G59530.2"/>
    <property type="gene ID" value="AT3G59530"/>
</dbReference>
<dbReference type="EnsemblPlants" id="AT3G59530.3">
    <molecule id="Q9M1B4-1"/>
    <property type="protein sequence ID" value="AT3G59530.3"/>
    <property type="gene ID" value="AT3G59530"/>
</dbReference>
<dbReference type="GeneID" id="825122"/>
<dbReference type="Gramene" id="AT3G59530.1">
    <molecule id="Q9M1B4-1"/>
    <property type="protein sequence ID" value="AT3G59530.1"/>
    <property type="gene ID" value="AT3G59530"/>
</dbReference>
<dbReference type="Gramene" id="AT3G59530.2">
    <molecule id="Q9M1B4-1"/>
    <property type="protein sequence ID" value="AT3G59530.2"/>
    <property type="gene ID" value="AT3G59530"/>
</dbReference>
<dbReference type="Gramene" id="AT3G59530.3">
    <molecule id="Q9M1B4-1"/>
    <property type="protein sequence ID" value="AT3G59530.3"/>
    <property type="gene ID" value="AT3G59530"/>
</dbReference>
<dbReference type="KEGG" id="ath:AT3G59530"/>
<dbReference type="Araport" id="AT3G59530"/>
<dbReference type="TAIR" id="AT3G59530">
    <property type="gene designation" value="LAP3"/>
</dbReference>
<dbReference type="eggNOG" id="KOG1520">
    <property type="taxonomic scope" value="Eukaryota"/>
</dbReference>
<dbReference type="HOGENOM" id="CLU_023267_2_0_1"/>
<dbReference type="InParanoid" id="Q9M1B4"/>
<dbReference type="OMA" id="CCRTRAQ"/>
<dbReference type="PhylomeDB" id="Q9M1B4"/>
<dbReference type="BioCyc" id="ARA:AT3G59530-MONOMER"/>
<dbReference type="PRO" id="PR:Q9M1B4"/>
<dbReference type="Proteomes" id="UP000006548">
    <property type="component" value="Chromosome 3"/>
</dbReference>
<dbReference type="ExpressionAtlas" id="Q9M1B4">
    <property type="expression patterns" value="baseline and differential"/>
</dbReference>
<dbReference type="GO" id="GO:0005773">
    <property type="term" value="C:vacuole"/>
    <property type="evidence" value="ECO:0007669"/>
    <property type="project" value="UniProtKB-SubCell"/>
</dbReference>
<dbReference type="GO" id="GO:0009555">
    <property type="term" value="P:pollen development"/>
    <property type="evidence" value="ECO:0000315"/>
    <property type="project" value="UniProtKB"/>
</dbReference>
<dbReference type="GO" id="GO:0010584">
    <property type="term" value="P:pollen exine formation"/>
    <property type="evidence" value="ECO:0000315"/>
    <property type="project" value="UniProtKB"/>
</dbReference>
<dbReference type="FunFam" id="2.120.10.30:FF:000032">
    <property type="entry name" value="Protein STRICTOSIDINE SYNTHASE-LIKE 13"/>
    <property type="match status" value="1"/>
</dbReference>
<dbReference type="Gene3D" id="2.120.10.30">
    <property type="entry name" value="TolB, C-terminal domain"/>
    <property type="match status" value="1"/>
</dbReference>
<dbReference type="InterPro" id="IPR011042">
    <property type="entry name" value="6-blade_b-propeller_TolB-like"/>
</dbReference>
<dbReference type="InterPro" id="IPR018119">
    <property type="entry name" value="Strictosidine_synth_cons-reg"/>
</dbReference>
<dbReference type="PANTHER" id="PTHR10426:SF21">
    <property type="entry name" value="PROTEIN STRICTOSIDINE SYNTHASE-LIKE 13"/>
    <property type="match status" value="1"/>
</dbReference>
<dbReference type="PANTHER" id="PTHR10426">
    <property type="entry name" value="STRICTOSIDINE SYNTHASE-RELATED"/>
    <property type="match status" value="1"/>
</dbReference>
<dbReference type="Pfam" id="PF20067">
    <property type="entry name" value="SSL_N"/>
    <property type="match status" value="1"/>
</dbReference>
<dbReference type="Pfam" id="PF03088">
    <property type="entry name" value="Str_synth"/>
    <property type="match status" value="1"/>
</dbReference>
<dbReference type="SUPFAM" id="SSF63829">
    <property type="entry name" value="Calcium-dependent phosphotriesterase"/>
    <property type="match status" value="1"/>
</dbReference>
<reference key="1">
    <citation type="journal article" date="2000" name="Nature">
        <title>Sequence and analysis of chromosome 3 of the plant Arabidopsis thaliana.</title>
        <authorList>
            <person name="Salanoubat M."/>
            <person name="Lemcke K."/>
            <person name="Rieger M."/>
            <person name="Ansorge W."/>
            <person name="Unseld M."/>
            <person name="Fartmann B."/>
            <person name="Valle G."/>
            <person name="Bloecker H."/>
            <person name="Perez-Alonso M."/>
            <person name="Obermaier B."/>
            <person name="Delseny M."/>
            <person name="Boutry M."/>
            <person name="Grivell L.A."/>
            <person name="Mache R."/>
            <person name="Puigdomenech P."/>
            <person name="De Simone V."/>
            <person name="Choisne N."/>
            <person name="Artiguenave F."/>
            <person name="Robert C."/>
            <person name="Brottier P."/>
            <person name="Wincker P."/>
            <person name="Cattolico L."/>
            <person name="Weissenbach J."/>
            <person name="Saurin W."/>
            <person name="Quetier F."/>
            <person name="Schaefer M."/>
            <person name="Mueller-Auer S."/>
            <person name="Gabel C."/>
            <person name="Fuchs M."/>
            <person name="Benes V."/>
            <person name="Wurmbach E."/>
            <person name="Drzonek H."/>
            <person name="Erfle H."/>
            <person name="Jordan N."/>
            <person name="Bangert S."/>
            <person name="Wiedelmann R."/>
            <person name="Kranz H."/>
            <person name="Voss H."/>
            <person name="Holland R."/>
            <person name="Brandt P."/>
            <person name="Nyakatura G."/>
            <person name="Vezzi A."/>
            <person name="D'Angelo M."/>
            <person name="Pallavicini A."/>
            <person name="Toppo S."/>
            <person name="Simionati B."/>
            <person name="Conrad A."/>
            <person name="Hornischer K."/>
            <person name="Kauer G."/>
            <person name="Loehnert T.-H."/>
            <person name="Nordsiek G."/>
            <person name="Reichelt J."/>
            <person name="Scharfe M."/>
            <person name="Schoen O."/>
            <person name="Bargues M."/>
            <person name="Terol J."/>
            <person name="Climent J."/>
            <person name="Navarro P."/>
            <person name="Collado C."/>
            <person name="Perez-Perez A."/>
            <person name="Ottenwaelder B."/>
            <person name="Duchemin D."/>
            <person name="Cooke R."/>
            <person name="Laudie M."/>
            <person name="Berger-Llauro C."/>
            <person name="Purnelle B."/>
            <person name="Masuy D."/>
            <person name="de Haan M."/>
            <person name="Maarse A.C."/>
            <person name="Alcaraz J.-P."/>
            <person name="Cottet A."/>
            <person name="Casacuberta E."/>
            <person name="Monfort A."/>
            <person name="Argiriou A."/>
            <person name="Flores M."/>
            <person name="Liguori R."/>
            <person name="Vitale D."/>
            <person name="Mannhaupt G."/>
            <person name="Haase D."/>
            <person name="Schoof H."/>
            <person name="Rudd S."/>
            <person name="Zaccaria P."/>
            <person name="Mewes H.-W."/>
            <person name="Mayer K.F.X."/>
            <person name="Kaul S."/>
            <person name="Town C.D."/>
            <person name="Koo H.L."/>
            <person name="Tallon L.J."/>
            <person name="Jenkins J."/>
            <person name="Rooney T."/>
            <person name="Rizzo M."/>
            <person name="Walts A."/>
            <person name="Utterback T."/>
            <person name="Fujii C.Y."/>
            <person name="Shea T.P."/>
            <person name="Creasy T.H."/>
            <person name="Haas B."/>
            <person name="Maiti R."/>
            <person name="Wu D."/>
            <person name="Peterson J."/>
            <person name="Van Aken S."/>
            <person name="Pai G."/>
            <person name="Militscher J."/>
            <person name="Sellers P."/>
            <person name="Gill J.E."/>
            <person name="Feldblyum T.V."/>
            <person name="Preuss D."/>
            <person name="Lin X."/>
            <person name="Nierman W.C."/>
            <person name="Salzberg S.L."/>
            <person name="White O."/>
            <person name="Venter J.C."/>
            <person name="Fraser C.M."/>
            <person name="Kaneko T."/>
            <person name="Nakamura Y."/>
            <person name="Sato S."/>
            <person name="Kato T."/>
            <person name="Asamizu E."/>
            <person name="Sasamoto S."/>
            <person name="Kimura T."/>
            <person name="Idesawa K."/>
            <person name="Kawashima K."/>
            <person name="Kishida Y."/>
            <person name="Kiyokawa C."/>
            <person name="Kohara M."/>
            <person name="Matsumoto M."/>
            <person name="Matsuno A."/>
            <person name="Muraki A."/>
            <person name="Nakayama S."/>
            <person name="Nakazaki N."/>
            <person name="Shinpo S."/>
            <person name="Takeuchi C."/>
            <person name="Wada T."/>
            <person name="Watanabe A."/>
            <person name="Yamada M."/>
            <person name="Yasuda M."/>
            <person name="Tabata S."/>
        </authorList>
    </citation>
    <scope>NUCLEOTIDE SEQUENCE [LARGE SCALE GENOMIC DNA]</scope>
    <source>
        <strain>cv. Columbia</strain>
    </source>
</reference>
<reference key="2">
    <citation type="journal article" date="2017" name="Plant J.">
        <title>Araport11: a complete reannotation of the Arabidopsis thaliana reference genome.</title>
        <authorList>
            <person name="Cheng C.Y."/>
            <person name="Krishnakumar V."/>
            <person name="Chan A.P."/>
            <person name="Thibaud-Nissen F."/>
            <person name="Schobel S."/>
            <person name="Town C.D."/>
        </authorList>
    </citation>
    <scope>GENOME REANNOTATION</scope>
    <source>
        <strain>cv. Columbia</strain>
    </source>
</reference>
<reference key="3">
    <citation type="journal article" date="2003" name="Science">
        <title>Empirical analysis of transcriptional activity in the Arabidopsis genome.</title>
        <authorList>
            <person name="Yamada K."/>
            <person name="Lim J."/>
            <person name="Dale J.M."/>
            <person name="Chen H."/>
            <person name="Shinn P."/>
            <person name="Palm C.J."/>
            <person name="Southwick A.M."/>
            <person name="Wu H.C."/>
            <person name="Kim C.J."/>
            <person name="Nguyen M."/>
            <person name="Pham P.K."/>
            <person name="Cheuk R.F."/>
            <person name="Karlin-Newmann G."/>
            <person name="Liu S.X."/>
            <person name="Lam B."/>
            <person name="Sakano H."/>
            <person name="Wu T."/>
            <person name="Yu G."/>
            <person name="Miranda M."/>
            <person name="Quach H.L."/>
            <person name="Tripp M."/>
            <person name="Chang C.H."/>
            <person name="Lee J.M."/>
            <person name="Toriumi M.J."/>
            <person name="Chan M.M."/>
            <person name="Tang C.C."/>
            <person name="Onodera C.S."/>
            <person name="Deng J.M."/>
            <person name="Akiyama K."/>
            <person name="Ansari Y."/>
            <person name="Arakawa T."/>
            <person name="Banh J."/>
            <person name="Banno F."/>
            <person name="Bowser L."/>
            <person name="Brooks S.Y."/>
            <person name="Carninci P."/>
            <person name="Chao Q."/>
            <person name="Choy N."/>
            <person name="Enju A."/>
            <person name="Goldsmith A.D."/>
            <person name="Gurjal M."/>
            <person name="Hansen N.F."/>
            <person name="Hayashizaki Y."/>
            <person name="Johnson-Hopson C."/>
            <person name="Hsuan V.W."/>
            <person name="Iida K."/>
            <person name="Karnes M."/>
            <person name="Khan S."/>
            <person name="Koesema E."/>
            <person name="Ishida J."/>
            <person name="Jiang P.X."/>
            <person name="Jones T."/>
            <person name="Kawai J."/>
            <person name="Kamiya A."/>
            <person name="Meyers C."/>
            <person name="Nakajima M."/>
            <person name="Narusaka M."/>
            <person name="Seki M."/>
            <person name="Sakurai T."/>
            <person name="Satou M."/>
            <person name="Tamse R."/>
            <person name="Vaysberg M."/>
            <person name="Wallender E.K."/>
            <person name="Wong C."/>
            <person name="Yamamura Y."/>
            <person name="Yuan S."/>
            <person name="Shinozaki K."/>
            <person name="Davis R.W."/>
            <person name="Theologis A."/>
            <person name="Ecker J.R."/>
        </authorList>
    </citation>
    <scope>NUCLEOTIDE SEQUENCE [LARGE SCALE MRNA] (ISOFORM 2)</scope>
    <source>
        <strain>cv. Columbia</strain>
    </source>
</reference>
<reference key="4">
    <citation type="journal article" date="2000" name="Biochem. Biophys. Res. Commun.">
        <title>Animal and plant members of a gene family with similarity to alkaloid-synthesizing enzymes.</title>
        <authorList>
            <person name="Fabbri M."/>
            <person name="Delp G."/>
            <person name="Schmidt O."/>
            <person name="Theopold U."/>
        </authorList>
    </citation>
    <scope>GENE FAMILY</scope>
    <scope>NOMENCLATURE</scope>
</reference>
<reference key="5">
    <citation type="journal article" date="2009" name="Plant Biol.">
        <title>Phylogenetic and transcriptional analysis of a strictosidine synthase-like gene family in Arabidopsis thaliana reveals involvement in plant defence responses.</title>
        <authorList>
            <person name="Sohani M.M."/>
            <person name="Schenk P.M."/>
            <person name="Schultz C.J."/>
            <person name="Schmidt O."/>
        </authorList>
    </citation>
    <scope>GENE FAMILY</scope>
    <source>
        <strain>cv. Columbia</strain>
    </source>
</reference>
<reference key="6">
    <citation type="journal article" date="2009" name="Sex. Plant Reprod.">
        <title>LAP3, a novel plant protein required for pollen development, is essential for proper exine formation.</title>
        <authorList>
            <person name="Dobritsa A.A."/>
            <person name="Nishikawa S."/>
            <person name="Preuss D."/>
            <person name="Urbanczyk-Wochniak E."/>
            <person name="Sumner L.W."/>
            <person name="Hammond A."/>
            <person name="Carlson A.L."/>
            <person name="Swanson R.J."/>
        </authorList>
    </citation>
    <scope>FUNCTION</scope>
    <scope>MUTAGENESIS OF GLU-89</scope>
    <scope>DISRUPTION PHENOTYPE</scope>
    <source>
        <strain>cv. Columbia</strain>
        <strain>cv. Landsberg erecta</strain>
    </source>
</reference>
<protein>
    <recommendedName>
        <fullName evidence="5">Protein STRICTOSIDINE SYNTHASE-LIKE 13</fullName>
        <shortName evidence="5">AtSSL13</shortName>
    </recommendedName>
    <alternativeName>
        <fullName evidence="7">Protein LESS ADHERENT POLLEN 3</fullName>
    </alternativeName>
    <alternativeName>
        <fullName evidence="6">Strictosidine synthase 11</fullName>
        <shortName evidence="6">AtSS11</shortName>
    </alternativeName>
</protein>
<keyword id="KW-0025">Alternative splicing</keyword>
<keyword id="KW-0217">Developmental protein</keyword>
<keyword id="KW-0325">Glycoprotein</keyword>
<keyword id="KW-1185">Reference proteome</keyword>
<keyword id="KW-0732">Signal</keyword>
<keyword id="KW-0926">Vacuole</keyword>